<accession>Q9LNC2</accession>
<accession>Q8LF19</accession>
<keyword id="KW-0175">Coiled coil</keyword>
<keyword id="KW-0963">Cytoplasm</keyword>
<keyword id="KW-0378">Hydrolase</keyword>
<keyword id="KW-0442">Lipid degradation</keyword>
<keyword id="KW-0443">Lipid metabolism</keyword>
<keyword id="KW-1185">Reference proteome</keyword>
<comment type="function">
    <text evidence="1">Acylhydrolase that catalyzes the hydrolysis of phospholipids at the sn-1 position.</text>
</comment>
<comment type="subcellular location">
    <subcellularLocation>
        <location evidence="1">Cytoplasm</location>
    </subcellularLocation>
</comment>
<comment type="similarity">
    <text evidence="5">Belongs to the AB hydrolase superfamily. Lipase family.</text>
</comment>
<proteinExistence type="evidence at transcript level"/>
<organism>
    <name type="scientific">Arabidopsis thaliana</name>
    <name type="common">Mouse-ear cress</name>
    <dbReference type="NCBI Taxonomy" id="3702"/>
    <lineage>
        <taxon>Eukaryota</taxon>
        <taxon>Viridiplantae</taxon>
        <taxon>Streptophyta</taxon>
        <taxon>Embryophyta</taxon>
        <taxon>Tracheophyta</taxon>
        <taxon>Spermatophyta</taxon>
        <taxon>Magnoliopsida</taxon>
        <taxon>eudicotyledons</taxon>
        <taxon>Gunneridae</taxon>
        <taxon>Pentapetalae</taxon>
        <taxon>rosids</taxon>
        <taxon>malvids</taxon>
        <taxon>Brassicales</taxon>
        <taxon>Brassicaceae</taxon>
        <taxon>Camelineae</taxon>
        <taxon>Arabidopsis</taxon>
    </lineage>
</organism>
<evidence type="ECO:0000250" key="1"/>
<evidence type="ECO:0000255" key="2"/>
<evidence type="ECO:0000255" key="3">
    <source>
        <dbReference type="PROSITE-ProRule" id="PRU10037"/>
    </source>
</evidence>
<evidence type="ECO:0000256" key="4">
    <source>
        <dbReference type="SAM" id="MobiDB-lite"/>
    </source>
</evidence>
<evidence type="ECO:0000305" key="5"/>
<gene>
    <name type="ordered locus">At1g06250</name>
    <name type="ORF">F9P14.11</name>
</gene>
<sequence length="423" mass="48123">MVEGIPKRWKVLSGQNKWKGLLDPLDPDLRRYIIHYGEMSQVGYDAFNWDRKSRYAGDCYYSKNRLLARTGFLKANPFRYKVTKYIYATASIKLPISFIVKSLSKDASRVQTNWMGYIAVATDQGKAMLGRRDIVVAWRGTLQPYEWANDFDFPLEPAISVFPVTDPKDNPRIGSGWLDIYTASDSRSPYDTTSAQEQVQGELKRLLELYKDEEISITFTGHSLGAVMSVLSAADLVYGKKNNININLQKKQVPITVFAFGSPRIGDHNFKNVVDSLQPLNILRIVNVPDVAPHYPLLLYSEIGEVLEINTLNSTYLKRSLNFRNYHNLEIYLHGMAGMQDTDGVFKLEIGRDISLVNKGLDALKDEYLVPSTWRCLANKGMLQMDDGTWKLDVHRRDHDDDVDADDNDDSSTSNQLQELNTD</sequence>
<reference key="1">
    <citation type="journal article" date="2000" name="Nature">
        <title>Sequence and analysis of chromosome 1 of the plant Arabidopsis thaliana.</title>
        <authorList>
            <person name="Theologis A."/>
            <person name="Ecker J.R."/>
            <person name="Palm C.J."/>
            <person name="Federspiel N.A."/>
            <person name="Kaul S."/>
            <person name="White O."/>
            <person name="Alonso J."/>
            <person name="Altafi H."/>
            <person name="Araujo R."/>
            <person name="Bowman C.L."/>
            <person name="Brooks S.Y."/>
            <person name="Buehler E."/>
            <person name="Chan A."/>
            <person name="Chao Q."/>
            <person name="Chen H."/>
            <person name="Cheuk R.F."/>
            <person name="Chin C.W."/>
            <person name="Chung M.K."/>
            <person name="Conn L."/>
            <person name="Conway A.B."/>
            <person name="Conway A.R."/>
            <person name="Creasy T.H."/>
            <person name="Dewar K."/>
            <person name="Dunn P."/>
            <person name="Etgu P."/>
            <person name="Feldblyum T.V."/>
            <person name="Feng J.-D."/>
            <person name="Fong B."/>
            <person name="Fujii C.Y."/>
            <person name="Gill J.E."/>
            <person name="Goldsmith A.D."/>
            <person name="Haas B."/>
            <person name="Hansen N.F."/>
            <person name="Hughes B."/>
            <person name="Huizar L."/>
            <person name="Hunter J.L."/>
            <person name="Jenkins J."/>
            <person name="Johnson-Hopson C."/>
            <person name="Khan S."/>
            <person name="Khaykin E."/>
            <person name="Kim C.J."/>
            <person name="Koo H.L."/>
            <person name="Kremenetskaia I."/>
            <person name="Kurtz D.B."/>
            <person name="Kwan A."/>
            <person name="Lam B."/>
            <person name="Langin-Hooper S."/>
            <person name="Lee A."/>
            <person name="Lee J.M."/>
            <person name="Lenz C.A."/>
            <person name="Li J.H."/>
            <person name="Li Y.-P."/>
            <person name="Lin X."/>
            <person name="Liu S.X."/>
            <person name="Liu Z.A."/>
            <person name="Luros J.S."/>
            <person name="Maiti R."/>
            <person name="Marziali A."/>
            <person name="Militscher J."/>
            <person name="Miranda M."/>
            <person name="Nguyen M."/>
            <person name="Nierman W.C."/>
            <person name="Osborne B.I."/>
            <person name="Pai G."/>
            <person name="Peterson J."/>
            <person name="Pham P.K."/>
            <person name="Rizzo M."/>
            <person name="Rooney T."/>
            <person name="Rowley D."/>
            <person name="Sakano H."/>
            <person name="Salzberg S.L."/>
            <person name="Schwartz J.R."/>
            <person name="Shinn P."/>
            <person name="Southwick A.M."/>
            <person name="Sun H."/>
            <person name="Tallon L.J."/>
            <person name="Tambunga G."/>
            <person name="Toriumi M.J."/>
            <person name="Town C.D."/>
            <person name="Utterback T."/>
            <person name="Van Aken S."/>
            <person name="Vaysberg M."/>
            <person name="Vysotskaia V.S."/>
            <person name="Walker M."/>
            <person name="Wu D."/>
            <person name="Yu G."/>
            <person name="Fraser C.M."/>
            <person name="Venter J.C."/>
            <person name="Davis R.W."/>
        </authorList>
    </citation>
    <scope>NUCLEOTIDE SEQUENCE [LARGE SCALE GENOMIC DNA]</scope>
    <source>
        <strain>cv. Columbia</strain>
    </source>
</reference>
<reference key="2">
    <citation type="journal article" date="2017" name="Plant J.">
        <title>Araport11: a complete reannotation of the Arabidopsis thaliana reference genome.</title>
        <authorList>
            <person name="Cheng C.Y."/>
            <person name="Krishnakumar V."/>
            <person name="Chan A.P."/>
            <person name="Thibaud-Nissen F."/>
            <person name="Schobel S."/>
            <person name="Town C.D."/>
        </authorList>
    </citation>
    <scope>GENOME REANNOTATION</scope>
    <source>
        <strain>cv. Columbia</strain>
    </source>
</reference>
<reference key="3">
    <citation type="submission" date="2002-03" db="EMBL/GenBank/DDBJ databases">
        <title>Full-length cDNA from Arabidopsis thaliana.</title>
        <authorList>
            <person name="Brover V.V."/>
            <person name="Troukhan M.E."/>
            <person name="Alexandrov N.A."/>
            <person name="Lu Y.-P."/>
            <person name="Flavell R.B."/>
            <person name="Feldmann K.A."/>
        </authorList>
    </citation>
    <scope>NUCLEOTIDE SEQUENCE [LARGE SCALE MRNA]</scope>
</reference>
<reference key="4">
    <citation type="journal article" date="2004" name="Trends Plant Sci.">
        <title>Phospholipid-derived signaling mediated by phospholipase A in plants.</title>
        <authorList>
            <person name="Ryu S.B."/>
        </authorList>
    </citation>
    <scope>GENE FAMILY</scope>
    <scope>NOMENCLATURE</scope>
</reference>
<feature type="chain" id="PRO_0000409358" description="Phospholipase A1-IIalpha">
    <location>
        <begin position="1"/>
        <end position="423"/>
    </location>
</feature>
<feature type="region of interest" description="Disordered" evidence="4">
    <location>
        <begin position="399"/>
        <end position="423"/>
    </location>
</feature>
<feature type="coiled-coil region" evidence="2">
    <location>
        <begin position="194"/>
        <end position="217"/>
    </location>
</feature>
<feature type="compositionally biased region" description="Acidic residues" evidence="4">
    <location>
        <begin position="401"/>
        <end position="410"/>
    </location>
</feature>
<feature type="compositionally biased region" description="Polar residues" evidence="4">
    <location>
        <begin position="411"/>
        <end position="423"/>
    </location>
</feature>
<feature type="active site" description="Acyl-ester intermediate" evidence="1">
    <location>
        <position position="223"/>
    </location>
</feature>
<feature type="active site" description="Charge relay system" evidence="3">
    <location>
        <position position="223"/>
    </location>
</feature>
<feature type="active site" description="Charge relay system" evidence="3">
    <location>
        <position position="290"/>
    </location>
</feature>
<feature type="active site" description="Charge relay system" evidence="3">
    <location>
        <position position="327"/>
    </location>
</feature>
<feature type="sequence conflict" description="In Ref. 3; AAM61647." evidence="5" ref="3">
    <original>L</original>
    <variation>F</variation>
    <location>
        <position position="67"/>
    </location>
</feature>
<feature type="sequence conflict" description="In Ref. 3; AAM61647." evidence="5" ref="3">
    <original>R</original>
    <variation>H</variation>
    <location>
        <position position="109"/>
    </location>
</feature>
<dbReference type="EC" id="3.1.1.-"/>
<dbReference type="EMBL" id="AC025290">
    <property type="protein sequence ID" value="AAF80222.1"/>
    <property type="molecule type" value="Genomic_DNA"/>
</dbReference>
<dbReference type="EMBL" id="CP002684">
    <property type="protein sequence ID" value="AEE27968.1"/>
    <property type="molecule type" value="Genomic_DNA"/>
</dbReference>
<dbReference type="EMBL" id="AY085093">
    <property type="protein sequence ID" value="AAM61647.1"/>
    <property type="molecule type" value="mRNA"/>
</dbReference>
<dbReference type="PIR" id="C86198">
    <property type="entry name" value="C86198"/>
</dbReference>
<dbReference type="RefSeq" id="NP_172115.1">
    <property type="nucleotide sequence ID" value="NM_100507.2"/>
</dbReference>
<dbReference type="SMR" id="Q9LNC2"/>
<dbReference type="FunCoup" id="Q9LNC2">
    <property type="interactions" value="11"/>
</dbReference>
<dbReference type="ESTHER" id="arath-F9P14.11">
    <property type="family name" value="Plant_phospholipase"/>
</dbReference>
<dbReference type="iPTMnet" id="Q9LNC2"/>
<dbReference type="PaxDb" id="3702-AT1G06250.1"/>
<dbReference type="ProteomicsDB" id="226197"/>
<dbReference type="EnsemblPlants" id="AT1G06250.1">
    <property type="protein sequence ID" value="AT1G06250.1"/>
    <property type="gene ID" value="AT1G06250"/>
</dbReference>
<dbReference type="GeneID" id="837135"/>
<dbReference type="Gramene" id="AT1G06250.1">
    <property type="protein sequence ID" value="AT1G06250.1"/>
    <property type="gene ID" value="AT1G06250"/>
</dbReference>
<dbReference type="KEGG" id="ath:AT1G06250"/>
<dbReference type="Araport" id="AT1G06250"/>
<dbReference type="TAIR" id="AT1G06250"/>
<dbReference type="eggNOG" id="KOG4569">
    <property type="taxonomic scope" value="Eukaryota"/>
</dbReference>
<dbReference type="HOGENOM" id="CLU_018841_0_0_1"/>
<dbReference type="InParanoid" id="Q9LNC2"/>
<dbReference type="OMA" id="EGIPKRW"/>
<dbReference type="PhylomeDB" id="Q9LNC2"/>
<dbReference type="BioCyc" id="ARA:AT1G06250-MONOMER"/>
<dbReference type="PRO" id="PR:Q9LNC2"/>
<dbReference type="Proteomes" id="UP000006548">
    <property type="component" value="Chromosome 1"/>
</dbReference>
<dbReference type="ExpressionAtlas" id="Q9LNC2">
    <property type="expression patterns" value="baseline and differential"/>
</dbReference>
<dbReference type="GO" id="GO:0005737">
    <property type="term" value="C:cytoplasm"/>
    <property type="evidence" value="ECO:0000250"/>
    <property type="project" value="UniProtKB"/>
</dbReference>
<dbReference type="GO" id="GO:0008970">
    <property type="term" value="F:phospholipase A1 activity"/>
    <property type="evidence" value="ECO:0000250"/>
    <property type="project" value="UniProtKB"/>
</dbReference>
<dbReference type="GO" id="GO:0016042">
    <property type="term" value="P:lipid catabolic process"/>
    <property type="evidence" value="ECO:0007669"/>
    <property type="project" value="UniProtKB-KW"/>
</dbReference>
<dbReference type="CDD" id="cd00519">
    <property type="entry name" value="Lipase_3"/>
    <property type="match status" value="1"/>
</dbReference>
<dbReference type="FunFam" id="3.40.50.1820:FF:000065">
    <property type="entry name" value="Phospholipase A1-II 3"/>
    <property type="match status" value="1"/>
</dbReference>
<dbReference type="Gene3D" id="3.40.50.1820">
    <property type="entry name" value="alpha/beta hydrolase"/>
    <property type="match status" value="1"/>
</dbReference>
<dbReference type="InterPro" id="IPR029058">
    <property type="entry name" value="AB_hydrolase_fold"/>
</dbReference>
<dbReference type="InterPro" id="IPR002921">
    <property type="entry name" value="Fungal_lipase-type"/>
</dbReference>
<dbReference type="InterPro" id="IPR033556">
    <property type="entry name" value="PLA"/>
</dbReference>
<dbReference type="PANTHER" id="PTHR31828:SF14">
    <property type="entry name" value="PHOSPHOLIPASE A1-IIALPHA"/>
    <property type="match status" value="1"/>
</dbReference>
<dbReference type="PANTHER" id="PTHR31828">
    <property type="entry name" value="PHOSPHOLIPASE A1-IIGAMMA"/>
    <property type="match status" value="1"/>
</dbReference>
<dbReference type="Pfam" id="PF01764">
    <property type="entry name" value="Lipase_3"/>
    <property type="match status" value="1"/>
</dbReference>
<dbReference type="SUPFAM" id="SSF53474">
    <property type="entry name" value="alpha/beta-Hydrolases"/>
    <property type="match status" value="1"/>
</dbReference>
<dbReference type="PROSITE" id="PS00120">
    <property type="entry name" value="LIPASE_SER"/>
    <property type="match status" value="1"/>
</dbReference>
<protein>
    <recommendedName>
        <fullName>Phospholipase A1-IIalpha</fullName>
        <ecNumber>3.1.1.-</ecNumber>
    </recommendedName>
</protein>
<name>PLA18_ARATH</name>